<dbReference type="EMBL" id="CP001601">
    <property type="protein sequence ID" value="ACP31995.1"/>
    <property type="molecule type" value="Genomic_DNA"/>
</dbReference>
<dbReference type="RefSeq" id="WP_010189643.1">
    <property type="nucleotide sequence ID" value="NZ_ACLH01000066.1"/>
</dbReference>
<dbReference type="SMR" id="C3PKQ9"/>
<dbReference type="STRING" id="548476.cauri_0396"/>
<dbReference type="GeneID" id="31923015"/>
<dbReference type="KEGG" id="car:cauri_0396"/>
<dbReference type="eggNOG" id="COG0197">
    <property type="taxonomic scope" value="Bacteria"/>
</dbReference>
<dbReference type="HOGENOM" id="CLU_078858_2_1_11"/>
<dbReference type="OrthoDB" id="9802589at2"/>
<dbReference type="Proteomes" id="UP000002077">
    <property type="component" value="Chromosome"/>
</dbReference>
<dbReference type="GO" id="GO:0022625">
    <property type="term" value="C:cytosolic large ribosomal subunit"/>
    <property type="evidence" value="ECO:0007669"/>
    <property type="project" value="TreeGrafter"/>
</dbReference>
<dbReference type="GO" id="GO:0019843">
    <property type="term" value="F:rRNA binding"/>
    <property type="evidence" value="ECO:0007669"/>
    <property type="project" value="UniProtKB-UniRule"/>
</dbReference>
<dbReference type="GO" id="GO:0003735">
    <property type="term" value="F:structural constituent of ribosome"/>
    <property type="evidence" value="ECO:0007669"/>
    <property type="project" value="InterPro"/>
</dbReference>
<dbReference type="GO" id="GO:0000049">
    <property type="term" value="F:tRNA binding"/>
    <property type="evidence" value="ECO:0007669"/>
    <property type="project" value="UniProtKB-KW"/>
</dbReference>
<dbReference type="GO" id="GO:0006412">
    <property type="term" value="P:translation"/>
    <property type="evidence" value="ECO:0007669"/>
    <property type="project" value="UniProtKB-UniRule"/>
</dbReference>
<dbReference type="CDD" id="cd01433">
    <property type="entry name" value="Ribosomal_L16_L10e"/>
    <property type="match status" value="1"/>
</dbReference>
<dbReference type="FunFam" id="3.90.1170.10:FF:000001">
    <property type="entry name" value="50S ribosomal protein L16"/>
    <property type="match status" value="1"/>
</dbReference>
<dbReference type="Gene3D" id="3.90.1170.10">
    <property type="entry name" value="Ribosomal protein L10e/L16"/>
    <property type="match status" value="1"/>
</dbReference>
<dbReference type="HAMAP" id="MF_01342">
    <property type="entry name" value="Ribosomal_uL16"/>
    <property type="match status" value="1"/>
</dbReference>
<dbReference type="InterPro" id="IPR047873">
    <property type="entry name" value="Ribosomal_uL16"/>
</dbReference>
<dbReference type="InterPro" id="IPR000114">
    <property type="entry name" value="Ribosomal_uL16_bact-type"/>
</dbReference>
<dbReference type="InterPro" id="IPR020798">
    <property type="entry name" value="Ribosomal_uL16_CS"/>
</dbReference>
<dbReference type="InterPro" id="IPR016180">
    <property type="entry name" value="Ribosomal_uL16_dom"/>
</dbReference>
<dbReference type="InterPro" id="IPR036920">
    <property type="entry name" value="Ribosomal_uL16_sf"/>
</dbReference>
<dbReference type="NCBIfam" id="TIGR01164">
    <property type="entry name" value="rplP_bact"/>
    <property type="match status" value="1"/>
</dbReference>
<dbReference type="PANTHER" id="PTHR12220">
    <property type="entry name" value="50S/60S RIBOSOMAL PROTEIN L16"/>
    <property type="match status" value="1"/>
</dbReference>
<dbReference type="PANTHER" id="PTHR12220:SF13">
    <property type="entry name" value="LARGE RIBOSOMAL SUBUNIT PROTEIN UL16M"/>
    <property type="match status" value="1"/>
</dbReference>
<dbReference type="Pfam" id="PF00252">
    <property type="entry name" value="Ribosomal_L16"/>
    <property type="match status" value="1"/>
</dbReference>
<dbReference type="PRINTS" id="PR00060">
    <property type="entry name" value="RIBOSOMALL16"/>
</dbReference>
<dbReference type="SUPFAM" id="SSF54686">
    <property type="entry name" value="Ribosomal protein L16p/L10e"/>
    <property type="match status" value="1"/>
</dbReference>
<dbReference type="PROSITE" id="PS00586">
    <property type="entry name" value="RIBOSOMAL_L16_1"/>
    <property type="match status" value="1"/>
</dbReference>
<dbReference type="PROSITE" id="PS00701">
    <property type="entry name" value="RIBOSOMAL_L16_2"/>
    <property type="match status" value="1"/>
</dbReference>
<sequence>MLIPKRVKYRRQHRPTRSGVSKGGNRINFGDYAIQALEPAYITNRQIEAARIAINRHVKRGGKVWINIFPDRPLTQKPLGVRMGSGKGPVEKWVANVKPGRILFEMTYPNEATAIEALRRAGQKLPCKVRIIKKEDQF</sequence>
<organism>
    <name type="scientific">Corynebacterium aurimucosum (strain ATCC 700975 / DSM 44827 / CIP 107346 / CN-1)</name>
    <name type="common">Corynebacterium nigricans</name>
    <dbReference type="NCBI Taxonomy" id="548476"/>
    <lineage>
        <taxon>Bacteria</taxon>
        <taxon>Bacillati</taxon>
        <taxon>Actinomycetota</taxon>
        <taxon>Actinomycetes</taxon>
        <taxon>Mycobacteriales</taxon>
        <taxon>Corynebacteriaceae</taxon>
        <taxon>Corynebacterium</taxon>
    </lineage>
</organism>
<protein>
    <recommendedName>
        <fullName evidence="1">Large ribosomal subunit protein uL16</fullName>
    </recommendedName>
    <alternativeName>
        <fullName evidence="3">50S ribosomal protein L16</fullName>
    </alternativeName>
</protein>
<name>RL16_CORA7</name>
<comment type="function">
    <text evidence="1">Binds 23S rRNA and is also seen to make contacts with the A and possibly P site tRNAs.</text>
</comment>
<comment type="subunit">
    <text evidence="1">Part of the 50S ribosomal subunit.</text>
</comment>
<comment type="similarity">
    <text evidence="1">Belongs to the universal ribosomal protein uL16 family.</text>
</comment>
<feature type="chain" id="PRO_1000166351" description="Large ribosomal subunit protein uL16">
    <location>
        <begin position="1"/>
        <end position="138"/>
    </location>
</feature>
<feature type="region of interest" description="Disordered" evidence="2">
    <location>
        <begin position="1"/>
        <end position="23"/>
    </location>
</feature>
<feature type="compositionally biased region" description="Basic residues" evidence="2">
    <location>
        <begin position="1"/>
        <end position="16"/>
    </location>
</feature>
<proteinExistence type="inferred from homology"/>
<reference key="1">
    <citation type="journal article" date="2010" name="BMC Genomics">
        <title>Complete genome sequence and lifestyle of black-pigmented Corynebacterium aurimucosum ATCC 700975 (formerly C. nigricans CN-1) isolated from a vaginal swab of a woman with spontaneous abortion.</title>
        <authorList>
            <person name="Trost E."/>
            <person name="Gotker S."/>
            <person name="Schneider J."/>
            <person name="Schneiker-Bekel S."/>
            <person name="Szczepanowski R."/>
            <person name="Tilker A."/>
            <person name="Viehoever P."/>
            <person name="Arnold W."/>
            <person name="Bekel T."/>
            <person name="Blom J."/>
            <person name="Gartemann K.H."/>
            <person name="Linke B."/>
            <person name="Goesmann A."/>
            <person name="Puhler A."/>
            <person name="Shukla S.K."/>
            <person name="Tauch A."/>
        </authorList>
    </citation>
    <scope>NUCLEOTIDE SEQUENCE [LARGE SCALE GENOMIC DNA]</scope>
    <source>
        <strain>ATCC 700975 / DSM 44827 / CIP 107346 / CN-1</strain>
    </source>
</reference>
<keyword id="KW-1185">Reference proteome</keyword>
<keyword id="KW-0687">Ribonucleoprotein</keyword>
<keyword id="KW-0689">Ribosomal protein</keyword>
<keyword id="KW-0694">RNA-binding</keyword>
<keyword id="KW-0699">rRNA-binding</keyword>
<keyword id="KW-0820">tRNA-binding</keyword>
<evidence type="ECO:0000255" key="1">
    <source>
        <dbReference type="HAMAP-Rule" id="MF_01342"/>
    </source>
</evidence>
<evidence type="ECO:0000256" key="2">
    <source>
        <dbReference type="SAM" id="MobiDB-lite"/>
    </source>
</evidence>
<evidence type="ECO:0000305" key="3"/>
<accession>C3PKQ9</accession>
<gene>
    <name evidence="1" type="primary">rplP</name>
    <name type="ordered locus">cauri_0396</name>
</gene>